<name>VIRB3_BRUME</name>
<gene>
    <name type="primary">virB3</name>
    <name type="ordered locus">BMEII0027</name>
</gene>
<keyword id="KW-1003">Cell membrane</keyword>
<keyword id="KW-0472">Membrane</keyword>
<keyword id="KW-0812">Transmembrane</keyword>
<keyword id="KW-1133">Transmembrane helix</keyword>
<keyword id="KW-0843">Virulence</keyword>
<proteinExistence type="inferred from homology"/>
<accession>Q9RPY2</accession>
<evidence type="ECO:0000255" key="1"/>
<evidence type="ECO:0000305" key="2"/>
<comment type="subcellular location">
    <subcellularLocation>
        <location evidence="2">Cell membrane</location>
        <topology evidence="2">Multi-pass membrane protein</topology>
    </subcellularLocation>
</comment>
<comment type="similarity">
    <text evidence="2">Belongs to the virB3 family.</text>
</comment>
<sequence length="116" mass="13082">MTTAPQESNARSAGYRGDPIFKGCTRPAMLFGVPVIPLVIVGGSIVLLSVWISMFILPLIVPIVLVMRQITQTDDQMFRLLGLKAQFRLIHFNRTGRFWRASAYSPIAFTKRKRES</sequence>
<organism>
    <name type="scientific">Brucella melitensis biotype 1 (strain ATCC 23456 / CCUG 17765 / NCTC 10094 / 16M)</name>
    <dbReference type="NCBI Taxonomy" id="224914"/>
    <lineage>
        <taxon>Bacteria</taxon>
        <taxon>Pseudomonadati</taxon>
        <taxon>Pseudomonadota</taxon>
        <taxon>Alphaproteobacteria</taxon>
        <taxon>Hyphomicrobiales</taxon>
        <taxon>Brucellaceae</taxon>
        <taxon>Brucella/Ochrobactrum group</taxon>
        <taxon>Brucella</taxon>
    </lineage>
</organism>
<protein>
    <recommendedName>
        <fullName>Type IV secretion system protein virB3</fullName>
    </recommendedName>
</protein>
<dbReference type="EMBL" id="AE008918">
    <property type="protein sequence ID" value="AAL53268.1"/>
    <property type="molecule type" value="Genomic_DNA"/>
</dbReference>
<dbReference type="PIR" id="AI3512">
    <property type="entry name" value="AI3512"/>
</dbReference>
<dbReference type="RefSeq" id="WP_002966512.1">
    <property type="nucleotide sequence ID" value="NZ_GG703779.1"/>
</dbReference>
<dbReference type="SMR" id="Q9RPY2"/>
<dbReference type="KEGG" id="bme:BMEII0027"/>
<dbReference type="KEGG" id="bmel:DK63_2092"/>
<dbReference type="PATRIC" id="fig|224914.52.peg.2193"/>
<dbReference type="eggNOG" id="COG3702">
    <property type="taxonomic scope" value="Bacteria"/>
</dbReference>
<dbReference type="PRO" id="PR:Q9RPY2"/>
<dbReference type="Proteomes" id="UP000000419">
    <property type="component" value="Chromosome II"/>
</dbReference>
<dbReference type="GO" id="GO:0005886">
    <property type="term" value="C:plasma membrane"/>
    <property type="evidence" value="ECO:0007669"/>
    <property type="project" value="UniProtKB-SubCell"/>
</dbReference>
<dbReference type="InterPro" id="IPR007792">
    <property type="entry name" value="T4SS_VirB3/TrbD/AvhB"/>
</dbReference>
<dbReference type="Pfam" id="PF05101">
    <property type="entry name" value="VirB3"/>
    <property type="match status" value="1"/>
</dbReference>
<reference key="1">
    <citation type="journal article" date="2002" name="Proc. Natl. Acad. Sci. U.S.A.">
        <title>The genome sequence of the facultative intracellular pathogen Brucella melitensis.</title>
        <authorList>
            <person name="DelVecchio V.G."/>
            <person name="Kapatral V."/>
            <person name="Redkar R.J."/>
            <person name="Patra G."/>
            <person name="Mujer C."/>
            <person name="Los T."/>
            <person name="Ivanova N."/>
            <person name="Anderson I."/>
            <person name="Bhattacharyya A."/>
            <person name="Lykidis A."/>
            <person name="Reznik G."/>
            <person name="Jablonski L."/>
            <person name="Larsen N."/>
            <person name="D'Souza M."/>
            <person name="Bernal A."/>
            <person name="Mazur M."/>
            <person name="Goltsman E."/>
            <person name="Selkov E."/>
            <person name="Elzer P.H."/>
            <person name="Hagius S."/>
            <person name="O'Callaghan D."/>
            <person name="Letesson J.-J."/>
            <person name="Haselkorn R."/>
            <person name="Kyrpides N.C."/>
            <person name="Overbeek R."/>
        </authorList>
    </citation>
    <scope>NUCLEOTIDE SEQUENCE [LARGE SCALE GENOMIC DNA]</scope>
    <source>
        <strain>ATCC 23456 / CCUG 17765 / NCTC 10094 / 16M</strain>
    </source>
</reference>
<feature type="chain" id="PRO_0000290174" description="Type IV secretion system protein virB3">
    <location>
        <begin position="1"/>
        <end position="116"/>
    </location>
</feature>
<feature type="transmembrane region" description="Helical" evidence="1">
    <location>
        <begin position="23"/>
        <end position="43"/>
    </location>
</feature>
<feature type="transmembrane region" description="Helical" evidence="1">
    <location>
        <begin position="45"/>
        <end position="65"/>
    </location>
</feature>